<evidence type="ECO:0000250" key="1"/>
<evidence type="ECO:0000255" key="2">
    <source>
        <dbReference type="PROSITE-ProRule" id="PRU00532"/>
    </source>
</evidence>
<evidence type="ECO:0000256" key="3">
    <source>
        <dbReference type="SAM" id="MobiDB-lite"/>
    </source>
</evidence>
<evidence type="ECO:0000269" key="4">
    <source>
    </source>
</evidence>
<evidence type="ECO:0000269" key="5">
    <source>
    </source>
</evidence>
<evidence type="ECO:0000305" key="6"/>
<proteinExistence type="evidence at protein level"/>
<comment type="function">
    <text evidence="4">Acetyltransferase required for the establishment of sister chromatid cohesion and couple the processes of cohesion and DNA replication to ensure that only sister chromatids become paired together. In contrast to the structural cohesins, the deposition and establishment factors are required only during S phase.</text>
</comment>
<comment type="subcellular location">
    <subcellularLocation>
        <location evidence="1">Nucleus</location>
    </subcellularLocation>
</comment>
<comment type="disruption phenotype">
    <text evidence="4">Flies display disrupt centromeric sister chromatid cohesion very early in division. This failure of sister chromatid cohesion does not require separase and is correlated with a failure of the cohesin component Scc1 to accumulate in centromeric regions.</text>
</comment>
<comment type="similarity">
    <text evidence="6">Belongs to the acetyltransferase family. ECO subfamily.</text>
</comment>
<comment type="sequence caution" evidence="6">
    <conflict type="erroneous initiation">
        <sequence resource="EMBL-CDS" id="AAL28680"/>
    </conflict>
</comment>
<organism>
    <name type="scientific">Drosophila melanogaster</name>
    <name type="common">Fruit fly</name>
    <dbReference type="NCBI Taxonomy" id="7227"/>
    <lineage>
        <taxon>Eukaryota</taxon>
        <taxon>Metazoa</taxon>
        <taxon>Ecdysozoa</taxon>
        <taxon>Arthropoda</taxon>
        <taxon>Hexapoda</taxon>
        <taxon>Insecta</taxon>
        <taxon>Pterygota</taxon>
        <taxon>Neoptera</taxon>
        <taxon>Endopterygota</taxon>
        <taxon>Diptera</taxon>
        <taxon>Brachycera</taxon>
        <taxon>Muscomorpha</taxon>
        <taxon>Ephydroidea</taxon>
        <taxon>Drosophilidae</taxon>
        <taxon>Drosophila</taxon>
        <taxon>Sophophora</taxon>
    </lineage>
</organism>
<gene>
    <name type="primary">eco</name>
    <name type="ORF">CG8598</name>
</gene>
<keyword id="KW-0012">Acyltransferase</keyword>
<keyword id="KW-0131">Cell cycle</keyword>
<keyword id="KW-0479">Metal-binding</keyword>
<keyword id="KW-0539">Nucleus</keyword>
<keyword id="KW-0597">Phosphoprotein</keyword>
<keyword id="KW-1185">Reference proteome</keyword>
<keyword id="KW-0808">Transferase</keyword>
<keyword id="KW-0862">Zinc</keyword>
<keyword id="KW-0863">Zinc-finger</keyword>
<sequence>METPTGSGRPSRMATPRLSERKRQLFGSPRSRLRQINDDEDDADVDSLGVLPLKTHVAANRKGRSLFAAVPGKSSSSANSSPETNKENKKTRGGVMTATAEQLPQLFTATMRLNSNSSSNSRNSSPRQTRVQRKRADSSMSSPTSSSEGTPSSRARNSIRRSPRTFSAQKDPDAFSSPESFQTRLSKVAAMLMKGQDSRSMLEKSKKKHNHSLKTTAQVHTTKPKKTSPAEESQSDDEKPSSSKNSRKNTEVRETRSSQIISPKTRNRRRPFTSADINCKTLKAAAHLHENMRSYDEEKTAAVKLENSRSRSKSPVEVFKSNDDAVKRNTGNTNNKTAKSSEVATAKRPESPGSSMKIDVEVPESDEEASNHKPQKRQHPETSTPVAPSADADSGSPQSKMRKVTLSSSIPTMAFYSHSGEAVTKSRRRPSISKNSLKQPTKISPTSRPLLGINKGVHHKIRKRHGFANRLPATDMDNILNSLSNERLKNLITTKREERAKVEEVHQILRNAKDPIKMAKPLSVIEADDANNNNNLPATAWQETSADFSDLSDVEDIDPIIEVEPIIPIIRHEPVQKSPTAEPADLSKRKFFKSGRRSSTCMEVRITDNIRASVSQGKIELVQTIRRKPRQVRVKSATIFSAEQATVDAILKNLDDTVVDEIVEANPVVQATPIDAEETTMETESLPDIIEYAPEANDVEIDPFAEFRQRLPYQTDDPNVVEQQQILLEFLISNNICTEKNFEIFIANPDDYKDEANQIVDNLYMVVNSEEAAQLAQMETVENTAVAIAPKQDAPAVEEVQPKLFPIFTQRLQPVVQKSLRRRPDTSMRLLTAAGGSNQYQIDAGQKAFGARQCQQCGLVYTVHEPEEELLHREYHNSIHVLRFKGWIDEDIVSVYPEWASDGRIIRINERAPTARLDRLRDLIGVVDKELGYSSYIVPKIFVAFIAVRKQQIVGFCLVQPLSQAHRFIQVDGTDYFSEESYPASCGVSRIWVSPLQRRSGIASKLLRVVQCHTVLGQEIARECIAFSTPTDDGRALARQFTGLDNFLTYDQ</sequence>
<reference key="1">
    <citation type="journal article" date="2000" name="Science">
        <title>The genome sequence of Drosophila melanogaster.</title>
        <authorList>
            <person name="Adams M.D."/>
            <person name="Celniker S.E."/>
            <person name="Holt R.A."/>
            <person name="Evans C.A."/>
            <person name="Gocayne J.D."/>
            <person name="Amanatides P.G."/>
            <person name="Scherer S.E."/>
            <person name="Li P.W."/>
            <person name="Hoskins R.A."/>
            <person name="Galle R.F."/>
            <person name="George R.A."/>
            <person name="Lewis S.E."/>
            <person name="Richards S."/>
            <person name="Ashburner M."/>
            <person name="Henderson S.N."/>
            <person name="Sutton G.G."/>
            <person name="Wortman J.R."/>
            <person name="Yandell M.D."/>
            <person name="Zhang Q."/>
            <person name="Chen L.X."/>
            <person name="Brandon R.C."/>
            <person name="Rogers Y.-H.C."/>
            <person name="Blazej R.G."/>
            <person name="Champe M."/>
            <person name="Pfeiffer B.D."/>
            <person name="Wan K.H."/>
            <person name="Doyle C."/>
            <person name="Baxter E.G."/>
            <person name="Helt G."/>
            <person name="Nelson C.R."/>
            <person name="Miklos G.L.G."/>
            <person name="Abril J.F."/>
            <person name="Agbayani A."/>
            <person name="An H.-J."/>
            <person name="Andrews-Pfannkoch C."/>
            <person name="Baldwin D."/>
            <person name="Ballew R.M."/>
            <person name="Basu A."/>
            <person name="Baxendale J."/>
            <person name="Bayraktaroglu L."/>
            <person name="Beasley E.M."/>
            <person name="Beeson K.Y."/>
            <person name="Benos P.V."/>
            <person name="Berman B.P."/>
            <person name="Bhandari D."/>
            <person name="Bolshakov S."/>
            <person name="Borkova D."/>
            <person name="Botchan M.R."/>
            <person name="Bouck J."/>
            <person name="Brokstein P."/>
            <person name="Brottier P."/>
            <person name="Burtis K.C."/>
            <person name="Busam D.A."/>
            <person name="Butler H."/>
            <person name="Cadieu E."/>
            <person name="Center A."/>
            <person name="Chandra I."/>
            <person name="Cherry J.M."/>
            <person name="Cawley S."/>
            <person name="Dahlke C."/>
            <person name="Davenport L.B."/>
            <person name="Davies P."/>
            <person name="de Pablos B."/>
            <person name="Delcher A."/>
            <person name="Deng Z."/>
            <person name="Mays A.D."/>
            <person name="Dew I."/>
            <person name="Dietz S.M."/>
            <person name="Dodson K."/>
            <person name="Doup L.E."/>
            <person name="Downes M."/>
            <person name="Dugan-Rocha S."/>
            <person name="Dunkov B.C."/>
            <person name="Dunn P."/>
            <person name="Durbin K.J."/>
            <person name="Evangelista C.C."/>
            <person name="Ferraz C."/>
            <person name="Ferriera S."/>
            <person name="Fleischmann W."/>
            <person name="Fosler C."/>
            <person name="Gabrielian A.E."/>
            <person name="Garg N.S."/>
            <person name="Gelbart W.M."/>
            <person name="Glasser K."/>
            <person name="Glodek A."/>
            <person name="Gong F."/>
            <person name="Gorrell J.H."/>
            <person name="Gu Z."/>
            <person name="Guan P."/>
            <person name="Harris M."/>
            <person name="Harris N.L."/>
            <person name="Harvey D.A."/>
            <person name="Heiman T.J."/>
            <person name="Hernandez J.R."/>
            <person name="Houck J."/>
            <person name="Hostin D."/>
            <person name="Houston K.A."/>
            <person name="Howland T.J."/>
            <person name="Wei M.-H."/>
            <person name="Ibegwam C."/>
            <person name="Jalali M."/>
            <person name="Kalush F."/>
            <person name="Karpen G.H."/>
            <person name="Ke Z."/>
            <person name="Kennison J.A."/>
            <person name="Ketchum K.A."/>
            <person name="Kimmel B.E."/>
            <person name="Kodira C.D."/>
            <person name="Kraft C.L."/>
            <person name="Kravitz S."/>
            <person name="Kulp D."/>
            <person name="Lai Z."/>
            <person name="Lasko P."/>
            <person name="Lei Y."/>
            <person name="Levitsky A.A."/>
            <person name="Li J.H."/>
            <person name="Li Z."/>
            <person name="Liang Y."/>
            <person name="Lin X."/>
            <person name="Liu X."/>
            <person name="Mattei B."/>
            <person name="McIntosh T.C."/>
            <person name="McLeod M.P."/>
            <person name="McPherson D."/>
            <person name="Merkulov G."/>
            <person name="Milshina N.V."/>
            <person name="Mobarry C."/>
            <person name="Morris J."/>
            <person name="Moshrefi A."/>
            <person name="Mount S.M."/>
            <person name="Moy M."/>
            <person name="Murphy B."/>
            <person name="Murphy L."/>
            <person name="Muzny D.M."/>
            <person name="Nelson D.L."/>
            <person name="Nelson D.R."/>
            <person name="Nelson K.A."/>
            <person name="Nixon K."/>
            <person name="Nusskern D.R."/>
            <person name="Pacleb J.M."/>
            <person name="Palazzolo M."/>
            <person name="Pittman G.S."/>
            <person name="Pan S."/>
            <person name="Pollard J."/>
            <person name="Puri V."/>
            <person name="Reese M.G."/>
            <person name="Reinert K."/>
            <person name="Remington K."/>
            <person name="Saunders R.D.C."/>
            <person name="Scheeler F."/>
            <person name="Shen H."/>
            <person name="Shue B.C."/>
            <person name="Siden-Kiamos I."/>
            <person name="Simpson M."/>
            <person name="Skupski M.P."/>
            <person name="Smith T.J."/>
            <person name="Spier E."/>
            <person name="Spradling A.C."/>
            <person name="Stapleton M."/>
            <person name="Strong R."/>
            <person name="Sun E."/>
            <person name="Svirskas R."/>
            <person name="Tector C."/>
            <person name="Turner R."/>
            <person name="Venter E."/>
            <person name="Wang A.H."/>
            <person name="Wang X."/>
            <person name="Wang Z.-Y."/>
            <person name="Wassarman D.A."/>
            <person name="Weinstock G.M."/>
            <person name="Weissenbach J."/>
            <person name="Williams S.M."/>
            <person name="Woodage T."/>
            <person name="Worley K.C."/>
            <person name="Wu D."/>
            <person name="Yang S."/>
            <person name="Yao Q.A."/>
            <person name="Ye J."/>
            <person name="Yeh R.-F."/>
            <person name="Zaveri J.S."/>
            <person name="Zhan M."/>
            <person name="Zhang G."/>
            <person name="Zhao Q."/>
            <person name="Zheng L."/>
            <person name="Zheng X.H."/>
            <person name="Zhong F.N."/>
            <person name="Zhong W."/>
            <person name="Zhou X."/>
            <person name="Zhu S.C."/>
            <person name="Zhu X."/>
            <person name="Smith H.O."/>
            <person name="Gibbs R.A."/>
            <person name="Myers E.W."/>
            <person name="Rubin G.M."/>
            <person name="Venter J.C."/>
        </authorList>
    </citation>
    <scope>NUCLEOTIDE SEQUENCE [LARGE SCALE GENOMIC DNA]</scope>
    <source>
        <strain>Berkeley</strain>
    </source>
</reference>
<reference key="2">
    <citation type="journal article" date="2002" name="Genome Biol.">
        <title>Annotation of the Drosophila melanogaster euchromatic genome: a systematic review.</title>
        <authorList>
            <person name="Misra S."/>
            <person name="Crosby M.A."/>
            <person name="Mungall C.J."/>
            <person name="Matthews B.B."/>
            <person name="Campbell K.S."/>
            <person name="Hradecky P."/>
            <person name="Huang Y."/>
            <person name="Kaminker J.S."/>
            <person name="Millburn G.H."/>
            <person name="Prochnik S.E."/>
            <person name="Smith C.D."/>
            <person name="Tupy J.L."/>
            <person name="Whitfield E.J."/>
            <person name="Bayraktaroglu L."/>
            <person name="Berman B.P."/>
            <person name="Bettencourt B.R."/>
            <person name="Celniker S.E."/>
            <person name="de Grey A.D.N.J."/>
            <person name="Drysdale R.A."/>
            <person name="Harris N.L."/>
            <person name="Richter J."/>
            <person name="Russo S."/>
            <person name="Schroeder A.J."/>
            <person name="Shu S.Q."/>
            <person name="Stapleton M."/>
            <person name="Yamada C."/>
            <person name="Ashburner M."/>
            <person name="Gelbart W.M."/>
            <person name="Rubin G.M."/>
            <person name="Lewis S.E."/>
        </authorList>
    </citation>
    <scope>GENOME REANNOTATION</scope>
    <source>
        <strain>Berkeley</strain>
    </source>
</reference>
<reference key="3">
    <citation type="submission" date="2004-08" db="EMBL/GenBank/DDBJ databases">
        <authorList>
            <person name="Stapleton M."/>
            <person name="Carlson J.W."/>
            <person name="Chavez C."/>
            <person name="Frise E."/>
            <person name="George R.A."/>
            <person name="Pacleb J.M."/>
            <person name="Park S."/>
            <person name="Wan K.H."/>
            <person name="Yu C."/>
            <person name="Rubin G.M."/>
            <person name="Celniker S.E."/>
        </authorList>
    </citation>
    <scope>NUCLEOTIDE SEQUENCE [LARGE SCALE MRNA]</scope>
    <source>
        <strain>Berkeley</strain>
        <tissue>Embryo</tissue>
    </source>
</reference>
<reference key="4">
    <citation type="journal article" date="2002" name="Genome Biol.">
        <title>A Drosophila full-length cDNA resource.</title>
        <authorList>
            <person name="Stapleton M."/>
            <person name="Carlson J.W."/>
            <person name="Brokstein P."/>
            <person name="Yu C."/>
            <person name="Champe M."/>
            <person name="George R.A."/>
            <person name="Guarin H."/>
            <person name="Kronmiller B."/>
            <person name="Pacleb J.M."/>
            <person name="Park S."/>
            <person name="Wan K.H."/>
            <person name="Rubin G.M."/>
            <person name="Celniker S.E."/>
        </authorList>
    </citation>
    <scope>NUCLEOTIDE SEQUENCE [LARGE SCALE MRNA] OF 489-1052</scope>
    <source>
        <strain>Berkeley</strain>
        <tissue>Embryo</tissue>
    </source>
</reference>
<reference key="5">
    <citation type="journal article" date="2003" name="Curr. Biol.">
        <title>Two putative acetyltransferases, san and deco, are required for establishing sister chromatid cohesion in Drosophila.</title>
        <authorList>
            <person name="Williams B.C."/>
            <person name="Garrett-Engele C.M."/>
            <person name="Li Z."/>
            <person name="Williams E.V."/>
            <person name="Rosenman E.D."/>
            <person name="Goldberg M.L."/>
        </authorList>
    </citation>
    <scope>FUNCTION</scope>
    <scope>DISRUPTION PHENOTYPE</scope>
</reference>
<reference key="6">
    <citation type="journal article" date="2008" name="J. Proteome Res.">
        <title>Phosphoproteome analysis of Drosophila melanogaster embryos.</title>
        <authorList>
            <person name="Zhai B."/>
            <person name="Villen J."/>
            <person name="Beausoleil S.A."/>
            <person name="Mintseris J."/>
            <person name="Gygi S.P."/>
        </authorList>
    </citation>
    <scope>PHOSPHORYLATION [LARGE SCALE ANALYSIS] AT SER-176; SER-177; SER-310; SER-312 AND SER-314</scope>
    <scope>IDENTIFICATION BY MASS SPECTROMETRY</scope>
    <source>
        <tissue>Embryo</tissue>
    </source>
</reference>
<feature type="chain" id="PRO_0000074544" description="N-acetyltransferase eco">
    <location>
        <begin position="1"/>
        <end position="1052"/>
    </location>
</feature>
<feature type="domain" description="N-acetyltransferase" evidence="2">
    <location>
        <begin position="906"/>
        <end position="1052"/>
    </location>
</feature>
<feature type="zinc finger region" description="CCHH-type">
    <location>
        <begin position="852"/>
        <end position="876"/>
    </location>
</feature>
<feature type="region of interest" description="Disordered" evidence="3">
    <location>
        <begin position="1"/>
        <end position="45"/>
    </location>
</feature>
<feature type="region of interest" description="Disordered" evidence="3">
    <location>
        <begin position="61"/>
        <end position="277"/>
    </location>
</feature>
<feature type="region of interest" description="Disordered" evidence="3">
    <location>
        <begin position="290"/>
        <end position="405"/>
    </location>
</feature>
<feature type="region of interest" description="Disordered" evidence="3">
    <location>
        <begin position="419"/>
        <end position="452"/>
    </location>
</feature>
<feature type="compositionally biased region" description="Polar residues" evidence="3">
    <location>
        <begin position="99"/>
        <end position="113"/>
    </location>
</feature>
<feature type="compositionally biased region" description="Low complexity" evidence="3">
    <location>
        <begin position="114"/>
        <end position="125"/>
    </location>
</feature>
<feature type="compositionally biased region" description="Low complexity" evidence="3">
    <location>
        <begin position="138"/>
        <end position="153"/>
    </location>
</feature>
<feature type="compositionally biased region" description="Basic and acidic residues" evidence="3">
    <location>
        <begin position="290"/>
        <end position="309"/>
    </location>
</feature>
<feature type="compositionally biased region" description="Polar residues" evidence="3">
    <location>
        <begin position="329"/>
        <end position="343"/>
    </location>
</feature>
<feature type="compositionally biased region" description="Polar residues" evidence="3">
    <location>
        <begin position="395"/>
        <end position="405"/>
    </location>
</feature>
<feature type="compositionally biased region" description="Polar residues" evidence="3">
    <location>
        <begin position="432"/>
        <end position="447"/>
    </location>
</feature>
<feature type="modified residue" description="Phosphoserine" evidence="5">
    <location>
        <position position="176"/>
    </location>
</feature>
<feature type="modified residue" description="Phosphoserine" evidence="5">
    <location>
        <position position="177"/>
    </location>
</feature>
<feature type="modified residue" description="Phosphoserine" evidence="5">
    <location>
        <position position="310"/>
    </location>
</feature>
<feature type="modified residue" description="Phosphoserine" evidence="5">
    <location>
        <position position="312"/>
    </location>
</feature>
<feature type="modified residue" description="Phosphoserine" evidence="5">
    <location>
        <position position="314"/>
    </location>
</feature>
<feature type="sequence conflict" description="In Ref. 3; AAT94442." evidence="6" ref="3">
    <original>K</original>
    <variation>E</variation>
    <location>
        <position position="264"/>
    </location>
</feature>
<name>ECO_DROME</name>
<dbReference type="EC" id="2.3.1.-"/>
<dbReference type="EMBL" id="AE014296">
    <property type="protein sequence ID" value="AAF50579.1"/>
    <property type="molecule type" value="Genomic_DNA"/>
</dbReference>
<dbReference type="EMBL" id="AE014296">
    <property type="protein sequence ID" value="AAN12052.2"/>
    <property type="molecule type" value="Genomic_DNA"/>
</dbReference>
<dbReference type="EMBL" id="BT015213">
    <property type="protein sequence ID" value="AAT94442.1"/>
    <property type="molecule type" value="mRNA"/>
</dbReference>
<dbReference type="EMBL" id="AY061132">
    <property type="protein sequence ID" value="AAL28680.1"/>
    <property type="status" value="ALT_INIT"/>
    <property type="molecule type" value="mRNA"/>
</dbReference>
<dbReference type="RefSeq" id="NP_648106.1">
    <property type="nucleotide sequence ID" value="NM_139849.3"/>
</dbReference>
<dbReference type="RefSeq" id="NP_729236.2">
    <property type="nucleotide sequence ID" value="NM_168201.2"/>
</dbReference>
<dbReference type="SMR" id="Q9VS50"/>
<dbReference type="BioGRID" id="64252">
    <property type="interactions" value="14"/>
</dbReference>
<dbReference type="FunCoup" id="Q9VS50">
    <property type="interactions" value="977"/>
</dbReference>
<dbReference type="IntAct" id="Q9VS50">
    <property type="interactions" value="6"/>
</dbReference>
<dbReference type="STRING" id="7227.FBpp0076592"/>
<dbReference type="GlyGen" id="Q9VS50">
    <property type="glycosylation" value="1 site"/>
</dbReference>
<dbReference type="iPTMnet" id="Q9VS50"/>
<dbReference type="PaxDb" id="7227-FBpp0076592"/>
<dbReference type="DNASU" id="38812"/>
<dbReference type="EnsemblMetazoa" id="FBtr0076882">
    <property type="protein sequence ID" value="FBpp0076592"/>
    <property type="gene ID" value="FBgn0035766"/>
</dbReference>
<dbReference type="EnsemblMetazoa" id="FBtr0100278">
    <property type="protein sequence ID" value="FBpp0099670"/>
    <property type="gene ID" value="FBgn0035766"/>
</dbReference>
<dbReference type="GeneID" id="38812"/>
<dbReference type="KEGG" id="dme:Dmel_CG8598"/>
<dbReference type="AGR" id="FB:FBgn0035766"/>
<dbReference type="CTD" id="38812"/>
<dbReference type="FlyBase" id="FBgn0035766">
    <property type="gene designation" value="eco"/>
</dbReference>
<dbReference type="VEuPathDB" id="VectorBase:FBgn0035766"/>
<dbReference type="eggNOG" id="KOG3014">
    <property type="taxonomic scope" value="Eukaryota"/>
</dbReference>
<dbReference type="GeneTree" id="ENSGT00940000156667"/>
<dbReference type="HOGENOM" id="CLU_016671_0_0_1"/>
<dbReference type="InParanoid" id="Q9VS50"/>
<dbReference type="OMA" id="IWVSPLH"/>
<dbReference type="OrthoDB" id="428854at2759"/>
<dbReference type="PhylomeDB" id="Q9VS50"/>
<dbReference type="Reactome" id="R-DME-2468052">
    <property type="pathway name" value="Establishment of Sister Chromatid Cohesion"/>
</dbReference>
<dbReference type="SignaLink" id="Q9VS50"/>
<dbReference type="BioGRID-ORCS" id="38812">
    <property type="hits" value="1 hit in 3 CRISPR screens"/>
</dbReference>
<dbReference type="GenomeRNAi" id="38812"/>
<dbReference type="PRO" id="PR:Q9VS50"/>
<dbReference type="Proteomes" id="UP000000803">
    <property type="component" value="Chromosome 3L"/>
</dbReference>
<dbReference type="Bgee" id="FBgn0035766">
    <property type="expression patterns" value="Expressed in fat body cell in male reproductive gland and 100 other cell types or tissues"/>
</dbReference>
<dbReference type="ExpressionAtlas" id="Q9VS50">
    <property type="expression patterns" value="baseline and differential"/>
</dbReference>
<dbReference type="GO" id="GO:0000785">
    <property type="term" value="C:chromatin"/>
    <property type="evidence" value="ECO:0000250"/>
    <property type="project" value="UniProtKB"/>
</dbReference>
<dbReference type="GO" id="GO:0005634">
    <property type="term" value="C:nucleus"/>
    <property type="evidence" value="ECO:0000318"/>
    <property type="project" value="GO_Central"/>
</dbReference>
<dbReference type="GO" id="GO:0016407">
    <property type="term" value="F:acetyltransferase activity"/>
    <property type="evidence" value="ECO:0000250"/>
    <property type="project" value="UniProtKB"/>
</dbReference>
<dbReference type="GO" id="GO:0061733">
    <property type="term" value="F:protein-lysine-acetyltransferase activity"/>
    <property type="evidence" value="ECO:0000318"/>
    <property type="project" value="GO_Central"/>
</dbReference>
<dbReference type="GO" id="GO:0008270">
    <property type="term" value="F:zinc ion binding"/>
    <property type="evidence" value="ECO:0007669"/>
    <property type="project" value="UniProtKB-KW"/>
</dbReference>
<dbReference type="GO" id="GO:0007064">
    <property type="term" value="P:mitotic sister chromatid cohesion"/>
    <property type="evidence" value="ECO:0000315"/>
    <property type="project" value="FlyBase"/>
</dbReference>
<dbReference type="CDD" id="cd04301">
    <property type="entry name" value="NAT_SF"/>
    <property type="match status" value="1"/>
</dbReference>
<dbReference type="Gene3D" id="3.40.630.30">
    <property type="match status" value="1"/>
</dbReference>
<dbReference type="InterPro" id="IPR028005">
    <property type="entry name" value="AcTrfase_ESCO_Znf_dom"/>
</dbReference>
<dbReference type="InterPro" id="IPR016181">
    <property type="entry name" value="Acyl_CoA_acyltransferase"/>
</dbReference>
<dbReference type="InterPro" id="IPR028009">
    <property type="entry name" value="ESCO_Acetyltransf_dom"/>
</dbReference>
<dbReference type="InterPro" id="IPR000182">
    <property type="entry name" value="GNAT_dom"/>
</dbReference>
<dbReference type="PANTHER" id="PTHR45884">
    <property type="entry name" value="N-ACETYLTRANSFERASE ECO"/>
    <property type="match status" value="1"/>
</dbReference>
<dbReference type="PANTHER" id="PTHR45884:SF2">
    <property type="entry name" value="N-ACETYLTRANSFERASE ECO"/>
    <property type="match status" value="1"/>
</dbReference>
<dbReference type="Pfam" id="PF13880">
    <property type="entry name" value="Acetyltransf_13"/>
    <property type="match status" value="1"/>
</dbReference>
<dbReference type="Pfam" id="PF13878">
    <property type="entry name" value="zf-C2H2_3"/>
    <property type="match status" value="1"/>
</dbReference>
<dbReference type="SUPFAM" id="SSF55729">
    <property type="entry name" value="Acyl-CoA N-acyltransferases (Nat)"/>
    <property type="match status" value="1"/>
</dbReference>
<dbReference type="PROSITE" id="PS51186">
    <property type="entry name" value="GNAT"/>
    <property type="match status" value="1"/>
</dbReference>
<accession>Q9VS50</accession>
<accession>A4V1K9</accession>
<accession>Q6AWN5</accession>
<accession>Q95RU6</accession>
<protein>
    <recommendedName>
        <fullName>N-acetyltransferase eco</fullName>
        <ecNumber>2.3.1.-</ecNumber>
    </recommendedName>
    <alternativeName>
        <fullName>Establishment of cohesion 1 homolog</fullName>
        <shortName>ECO1 homolog</shortName>
    </alternativeName>
</protein>